<keyword id="KW-0903">Direct protein sequencing</keyword>
<protein>
    <recommendedName>
        <fullName>[Phe6]-mosact</fullName>
    </recommendedName>
</protein>
<accession>P19853</accession>
<feature type="peptide" id="PRO_0000044170" description="[Phe6]-mosact">
    <location>
        <begin position="1"/>
        <end position="9"/>
    </location>
</feature>
<comment type="function">
    <text>Stimulates sperm respiration and motility.</text>
</comment>
<dbReference type="PIR" id="JN0027">
    <property type="entry name" value="JN0027"/>
</dbReference>
<sequence>DSDSAFLIG</sequence>
<name>MOSF_CLYJA</name>
<proteinExistence type="evidence at protein level"/>
<reference key="1">
    <citation type="journal article" date="1987" name="Zool. Sci.">
        <title>Purification and structure of mosact and its derivatives from the egg jelly of the sea urchin Clypeaster japonicus.</title>
        <authorList>
            <person name="Suzuki N."/>
            <person name="Kurita M."/>
            <person name="Yoshino K.I."/>
            <person name="Kajiura H."/>
            <person name="Nomura K."/>
            <person name="Yamaguchi M."/>
        </authorList>
    </citation>
    <scope>PROTEIN SEQUENCE</scope>
    <source>
        <tissue>Egg jelly</tissue>
    </source>
</reference>
<organism>
    <name type="scientific">Clypeaster japonicus</name>
    <name type="common">Sand dollar</name>
    <dbReference type="NCBI Taxonomy" id="7644"/>
    <lineage>
        <taxon>Eukaryota</taxon>
        <taxon>Metazoa</taxon>
        <taxon>Echinodermata</taxon>
        <taxon>Eleutherozoa</taxon>
        <taxon>Echinozoa</taxon>
        <taxon>Echinoidea</taxon>
        <taxon>Euechinoidea</taxon>
        <taxon>Gnathostomata</taxon>
        <taxon>Clypeasteroida</taxon>
        <taxon>Clypeasteridae</taxon>
        <taxon>Clypeaster</taxon>
    </lineage>
</organism>